<sequence length="230" mass="25366">MAKASLDKDPFDVASMFDDVGDKYDLTNTVLSFGQDRVWRRRTRERLDLKPGEKVLDLAAGTAVSTVELAKSGAWCVACDFSQGMLAAGKHRNVPMVVGDGMTLPFADNSFDAVTISYGLRNIHDFRAGLREMARVTKPGGRLTVAEFSTPVIPVFGTLYKEYLMRLLPKVARVVSSNPEAYIYLAESIRAWPDQEDLAREINANGWSDCGWQNLTFGIVAMHSAIKPGN</sequence>
<comment type="function">
    <text evidence="1">Methyltransferase required for the conversion of demethylmenaquinol (DMKH2) to menaquinol (MKH2).</text>
</comment>
<comment type="catalytic activity">
    <reaction evidence="1">
        <text>a 2-demethylmenaquinol + S-adenosyl-L-methionine = a menaquinol + S-adenosyl-L-homocysteine + H(+)</text>
        <dbReference type="Rhea" id="RHEA:42640"/>
        <dbReference type="Rhea" id="RHEA-COMP:9539"/>
        <dbReference type="Rhea" id="RHEA-COMP:9563"/>
        <dbReference type="ChEBI" id="CHEBI:15378"/>
        <dbReference type="ChEBI" id="CHEBI:18151"/>
        <dbReference type="ChEBI" id="CHEBI:55437"/>
        <dbReference type="ChEBI" id="CHEBI:57856"/>
        <dbReference type="ChEBI" id="CHEBI:59789"/>
        <dbReference type="EC" id="2.1.1.163"/>
    </reaction>
</comment>
<comment type="pathway">
    <text evidence="1">Quinol/quinone metabolism; menaquinone biosynthesis; menaquinol from 1,4-dihydroxy-2-naphthoate: step 2/2.</text>
</comment>
<comment type="similarity">
    <text evidence="1">Belongs to the class I-like SAM-binding methyltransferase superfamily. MenG/UbiE family.</text>
</comment>
<comment type="sequence caution" evidence="2">
    <conflict type="erroneous initiation">
        <sequence resource="EMBL-CDS" id="BAC17291"/>
    </conflict>
</comment>
<name>MENG_COREF</name>
<keyword id="KW-0474">Menaquinone biosynthesis</keyword>
<keyword id="KW-0489">Methyltransferase</keyword>
<keyword id="KW-1185">Reference proteome</keyword>
<keyword id="KW-0949">S-adenosyl-L-methionine</keyword>
<keyword id="KW-0808">Transferase</keyword>
<dbReference type="EC" id="2.1.1.163" evidence="1"/>
<dbReference type="EMBL" id="BA000035">
    <property type="protein sequence ID" value="BAC17291.1"/>
    <property type="status" value="ALT_INIT"/>
    <property type="molecule type" value="Genomic_DNA"/>
</dbReference>
<dbReference type="RefSeq" id="WP_011075007.1">
    <property type="nucleotide sequence ID" value="NC_004369.1"/>
</dbReference>
<dbReference type="SMR" id="Q8FSB3"/>
<dbReference type="STRING" id="196164.gene:10740879"/>
<dbReference type="KEGG" id="cef:CE0481"/>
<dbReference type="eggNOG" id="COG2226">
    <property type="taxonomic scope" value="Bacteria"/>
</dbReference>
<dbReference type="HOGENOM" id="CLU_037990_0_0_11"/>
<dbReference type="OrthoDB" id="9808140at2"/>
<dbReference type="UniPathway" id="UPA00079">
    <property type="reaction ID" value="UER00169"/>
</dbReference>
<dbReference type="Proteomes" id="UP000001409">
    <property type="component" value="Chromosome"/>
</dbReference>
<dbReference type="GO" id="GO:0043770">
    <property type="term" value="F:demethylmenaquinone methyltransferase activity"/>
    <property type="evidence" value="ECO:0007669"/>
    <property type="project" value="UniProtKB-UniRule"/>
</dbReference>
<dbReference type="GO" id="GO:0009234">
    <property type="term" value="P:menaquinone biosynthetic process"/>
    <property type="evidence" value="ECO:0007669"/>
    <property type="project" value="UniProtKB-UniRule"/>
</dbReference>
<dbReference type="GO" id="GO:0032259">
    <property type="term" value="P:methylation"/>
    <property type="evidence" value="ECO:0007669"/>
    <property type="project" value="UniProtKB-KW"/>
</dbReference>
<dbReference type="CDD" id="cd02440">
    <property type="entry name" value="AdoMet_MTases"/>
    <property type="match status" value="1"/>
</dbReference>
<dbReference type="Gene3D" id="3.40.50.150">
    <property type="entry name" value="Vaccinia Virus protein VP39"/>
    <property type="match status" value="1"/>
</dbReference>
<dbReference type="HAMAP" id="MF_01813">
    <property type="entry name" value="MenG_UbiE_methyltr"/>
    <property type="match status" value="1"/>
</dbReference>
<dbReference type="InterPro" id="IPR029063">
    <property type="entry name" value="SAM-dependent_MTases_sf"/>
</dbReference>
<dbReference type="InterPro" id="IPR004033">
    <property type="entry name" value="UbiE/COQ5_MeTrFase"/>
</dbReference>
<dbReference type="InterPro" id="IPR023576">
    <property type="entry name" value="UbiE/COQ5_MeTrFase_CS"/>
</dbReference>
<dbReference type="NCBIfam" id="TIGR01934">
    <property type="entry name" value="MenG_MenH_UbiE"/>
    <property type="match status" value="1"/>
</dbReference>
<dbReference type="NCBIfam" id="NF001241">
    <property type="entry name" value="PRK00216.1-2"/>
    <property type="match status" value="1"/>
</dbReference>
<dbReference type="PANTHER" id="PTHR43591:SF24">
    <property type="entry name" value="2-METHOXY-6-POLYPRENYL-1,4-BENZOQUINOL METHYLASE, MITOCHONDRIAL"/>
    <property type="match status" value="1"/>
</dbReference>
<dbReference type="PANTHER" id="PTHR43591">
    <property type="entry name" value="METHYLTRANSFERASE"/>
    <property type="match status" value="1"/>
</dbReference>
<dbReference type="Pfam" id="PF01209">
    <property type="entry name" value="Ubie_methyltran"/>
    <property type="match status" value="1"/>
</dbReference>
<dbReference type="SUPFAM" id="SSF53335">
    <property type="entry name" value="S-adenosyl-L-methionine-dependent methyltransferases"/>
    <property type="match status" value="1"/>
</dbReference>
<dbReference type="PROSITE" id="PS51608">
    <property type="entry name" value="SAM_MT_UBIE"/>
    <property type="match status" value="1"/>
</dbReference>
<dbReference type="PROSITE" id="PS01183">
    <property type="entry name" value="UBIE_1"/>
    <property type="match status" value="1"/>
</dbReference>
<dbReference type="PROSITE" id="PS01184">
    <property type="entry name" value="UBIE_2"/>
    <property type="match status" value="1"/>
</dbReference>
<organism>
    <name type="scientific">Corynebacterium efficiens (strain DSM 44549 / YS-314 / AJ 12310 / JCM 11189 / NBRC 100395)</name>
    <dbReference type="NCBI Taxonomy" id="196164"/>
    <lineage>
        <taxon>Bacteria</taxon>
        <taxon>Bacillati</taxon>
        <taxon>Actinomycetota</taxon>
        <taxon>Actinomycetes</taxon>
        <taxon>Mycobacteriales</taxon>
        <taxon>Corynebacteriaceae</taxon>
        <taxon>Corynebacterium</taxon>
    </lineage>
</organism>
<gene>
    <name evidence="1" type="primary">menG</name>
    <name type="ordered locus">CE0481</name>
</gene>
<protein>
    <recommendedName>
        <fullName evidence="1">Demethylmenaquinone methyltransferase</fullName>
        <ecNumber evidence="1">2.1.1.163</ecNumber>
    </recommendedName>
</protein>
<accession>Q8FSB3</accession>
<proteinExistence type="inferred from homology"/>
<feature type="chain" id="PRO_0000193269" description="Demethylmenaquinone methyltransferase">
    <location>
        <begin position="1"/>
        <end position="230"/>
    </location>
</feature>
<feature type="binding site" evidence="1">
    <location>
        <position position="62"/>
    </location>
    <ligand>
        <name>S-adenosyl-L-methionine</name>
        <dbReference type="ChEBI" id="CHEBI:59789"/>
    </ligand>
</feature>
<feature type="binding site" evidence="1">
    <location>
        <position position="80"/>
    </location>
    <ligand>
        <name>S-adenosyl-L-methionine</name>
        <dbReference type="ChEBI" id="CHEBI:59789"/>
    </ligand>
</feature>
<feature type="binding site" evidence="1">
    <location>
        <begin position="100"/>
        <end position="101"/>
    </location>
    <ligand>
        <name>S-adenosyl-L-methionine</name>
        <dbReference type="ChEBI" id="CHEBI:59789"/>
    </ligand>
</feature>
<feature type="binding site" evidence="1">
    <location>
        <position position="117"/>
    </location>
    <ligand>
        <name>S-adenosyl-L-methionine</name>
        <dbReference type="ChEBI" id="CHEBI:59789"/>
    </ligand>
</feature>
<reference key="1">
    <citation type="journal article" date="2003" name="Genome Res.">
        <title>Comparative complete genome sequence analysis of the amino acid replacements responsible for the thermostability of Corynebacterium efficiens.</title>
        <authorList>
            <person name="Nishio Y."/>
            <person name="Nakamura Y."/>
            <person name="Kawarabayasi Y."/>
            <person name="Usuda Y."/>
            <person name="Kimura E."/>
            <person name="Sugimoto S."/>
            <person name="Matsui K."/>
            <person name="Yamagishi A."/>
            <person name="Kikuchi H."/>
            <person name="Ikeo K."/>
            <person name="Gojobori T."/>
        </authorList>
    </citation>
    <scope>NUCLEOTIDE SEQUENCE [LARGE SCALE GENOMIC DNA]</scope>
    <source>
        <strain>DSM 44549 / YS-314 / AJ 12310 / JCM 11189 / NBRC 100395</strain>
    </source>
</reference>
<evidence type="ECO:0000255" key="1">
    <source>
        <dbReference type="HAMAP-Rule" id="MF_01813"/>
    </source>
</evidence>
<evidence type="ECO:0000305" key="2"/>